<name>Y029_MYCBO</name>
<feature type="chain" id="PRO_0000103647" description="Uncharacterized protein Mb0029">
    <location>
        <begin position="1"/>
        <end position="101"/>
    </location>
</feature>
<proteinExistence type="predicted"/>
<organism>
    <name type="scientific">Mycobacterium bovis (strain ATCC BAA-935 / AF2122/97)</name>
    <dbReference type="NCBI Taxonomy" id="233413"/>
    <lineage>
        <taxon>Bacteria</taxon>
        <taxon>Bacillati</taxon>
        <taxon>Actinomycetota</taxon>
        <taxon>Actinomycetes</taxon>
        <taxon>Mycobacteriales</taxon>
        <taxon>Mycobacteriaceae</taxon>
        <taxon>Mycobacterium</taxon>
        <taxon>Mycobacterium tuberculosis complex</taxon>
    </lineage>
</organism>
<reference key="1">
    <citation type="journal article" date="2003" name="Proc. Natl. Acad. Sci. U.S.A.">
        <title>The complete genome sequence of Mycobacterium bovis.</title>
        <authorList>
            <person name="Garnier T."/>
            <person name="Eiglmeier K."/>
            <person name="Camus J.-C."/>
            <person name="Medina N."/>
            <person name="Mansoor H."/>
            <person name="Pryor M."/>
            <person name="Duthoy S."/>
            <person name="Grondin S."/>
            <person name="Lacroix C."/>
            <person name="Monsempe C."/>
            <person name="Simon S."/>
            <person name="Harris B."/>
            <person name="Atkin R."/>
            <person name="Doggett J."/>
            <person name="Mayes R."/>
            <person name="Keating L."/>
            <person name="Wheeler P.R."/>
            <person name="Parkhill J."/>
            <person name="Barrell B.G."/>
            <person name="Cole S.T."/>
            <person name="Gordon S.V."/>
            <person name="Hewinson R.G."/>
        </authorList>
    </citation>
    <scope>NUCLEOTIDE SEQUENCE [LARGE SCALE GENOMIC DNA]</scope>
    <source>
        <strain>ATCC BAA-935 / AF2122/97</strain>
    </source>
</reference>
<reference key="2">
    <citation type="journal article" date="2017" name="Genome Announc.">
        <title>Updated reference genome sequence and annotation of Mycobacterium bovis AF2122/97.</title>
        <authorList>
            <person name="Malone K.M."/>
            <person name="Farrell D."/>
            <person name="Stuber T.P."/>
            <person name="Schubert O.T."/>
            <person name="Aebersold R."/>
            <person name="Robbe-Austerman S."/>
            <person name="Gordon S.V."/>
        </authorList>
    </citation>
    <scope>NUCLEOTIDE SEQUENCE [LARGE SCALE GENOMIC DNA]</scope>
    <scope>GENOME REANNOTATION</scope>
    <source>
        <strain>ATCC BAA-935 / AF2122/97</strain>
    </source>
</reference>
<gene>
    <name type="ordered locus">BQ2027_MB0029</name>
</gene>
<keyword id="KW-1185">Reference proteome</keyword>
<protein>
    <recommendedName>
        <fullName>Uncharacterized protein Mb0029</fullName>
    </recommendedName>
</protein>
<dbReference type="EMBL" id="LT708304">
    <property type="protein sequence ID" value="SIT98380.1"/>
    <property type="molecule type" value="Genomic_DNA"/>
</dbReference>
<dbReference type="RefSeq" id="NP_853698.1">
    <property type="nucleotide sequence ID" value="NC_002945.3"/>
</dbReference>
<dbReference type="RefSeq" id="WP_003400405.1">
    <property type="nucleotide sequence ID" value="NC_002945.4"/>
</dbReference>
<dbReference type="SMR" id="P64670"/>
<dbReference type="KEGG" id="mbo:BQ2027_MB0029"/>
<dbReference type="PATRIC" id="fig|233413.5.peg.34"/>
<dbReference type="Proteomes" id="UP000001419">
    <property type="component" value="Chromosome"/>
</dbReference>
<dbReference type="InterPro" id="IPR024426">
    <property type="entry name" value="DUF2694"/>
</dbReference>
<dbReference type="Pfam" id="PF10904">
    <property type="entry name" value="DUF2694"/>
    <property type="match status" value="1"/>
</dbReference>
<sequence>MTDANPAFDTVHPSGHILVRSCRGGYMHSVSLSEAAMETDAETLAEAILLTADVSCLKALLEVRNEIVAAGHTPSAQVPTTDDLNVAIEKLLAHQLRRRNR</sequence>
<accession>P64670</accession>
<accession>A0A1R3XV89</accession>
<accession>P71598</accession>
<accession>X2BDU3</accession>